<protein>
    <recommendedName>
        <fullName evidence="1">ATP-dependent Clp protease proteolytic subunit</fullName>
        <ecNumber evidence="1">3.4.21.92</ecNumber>
    </recommendedName>
    <alternativeName>
        <fullName evidence="1">Endopeptidase Clp</fullName>
    </alternativeName>
</protein>
<name>CLPP_XANCP</name>
<organism>
    <name type="scientific">Xanthomonas campestris pv. campestris (strain ATCC 33913 / DSM 3586 / NCPPB 528 / LMG 568 / P 25)</name>
    <dbReference type="NCBI Taxonomy" id="190485"/>
    <lineage>
        <taxon>Bacteria</taxon>
        <taxon>Pseudomonadati</taxon>
        <taxon>Pseudomonadota</taxon>
        <taxon>Gammaproteobacteria</taxon>
        <taxon>Lysobacterales</taxon>
        <taxon>Lysobacteraceae</taxon>
        <taxon>Xanthomonas</taxon>
    </lineage>
</organism>
<accession>Q8PBY6</accession>
<evidence type="ECO:0000255" key="1">
    <source>
        <dbReference type="HAMAP-Rule" id="MF_00444"/>
    </source>
</evidence>
<gene>
    <name evidence="1" type="primary">clpP</name>
    <name type="ordered locus">XCC0975</name>
</gene>
<feature type="chain" id="PRO_0000179720" description="ATP-dependent Clp protease proteolytic subunit">
    <location>
        <begin position="1"/>
        <end position="208"/>
    </location>
</feature>
<feature type="active site" description="Nucleophile" evidence="1">
    <location>
        <position position="105"/>
    </location>
</feature>
<feature type="active site" evidence="1">
    <location>
        <position position="130"/>
    </location>
</feature>
<dbReference type="EC" id="3.4.21.92" evidence="1"/>
<dbReference type="EMBL" id="AE008922">
    <property type="protein sequence ID" value="AAM40280.1"/>
    <property type="molecule type" value="Genomic_DNA"/>
</dbReference>
<dbReference type="RefSeq" id="NP_636356.1">
    <property type="nucleotide sequence ID" value="NC_003902.1"/>
</dbReference>
<dbReference type="RefSeq" id="WP_011036184.1">
    <property type="nucleotide sequence ID" value="NC_003902.1"/>
</dbReference>
<dbReference type="SMR" id="Q8PBY6"/>
<dbReference type="STRING" id="190485.XCC0975"/>
<dbReference type="MEROPS" id="S14.001"/>
<dbReference type="EnsemblBacteria" id="AAM40280">
    <property type="protein sequence ID" value="AAM40280"/>
    <property type="gene ID" value="XCC0975"/>
</dbReference>
<dbReference type="KEGG" id="xcc:XCC0975"/>
<dbReference type="PATRIC" id="fig|190485.4.peg.1045"/>
<dbReference type="eggNOG" id="COG0740">
    <property type="taxonomic scope" value="Bacteria"/>
</dbReference>
<dbReference type="HOGENOM" id="CLU_058707_3_2_6"/>
<dbReference type="OrthoDB" id="9802800at2"/>
<dbReference type="PHI-base" id="PHI:10726"/>
<dbReference type="Proteomes" id="UP000001010">
    <property type="component" value="Chromosome"/>
</dbReference>
<dbReference type="GO" id="GO:0005737">
    <property type="term" value="C:cytoplasm"/>
    <property type="evidence" value="ECO:0007669"/>
    <property type="project" value="UniProtKB-SubCell"/>
</dbReference>
<dbReference type="GO" id="GO:0009368">
    <property type="term" value="C:endopeptidase Clp complex"/>
    <property type="evidence" value="ECO:0000318"/>
    <property type="project" value="GO_Central"/>
</dbReference>
<dbReference type="GO" id="GO:0004176">
    <property type="term" value="F:ATP-dependent peptidase activity"/>
    <property type="evidence" value="ECO:0000318"/>
    <property type="project" value="GO_Central"/>
</dbReference>
<dbReference type="GO" id="GO:0051117">
    <property type="term" value="F:ATPase binding"/>
    <property type="evidence" value="ECO:0000318"/>
    <property type="project" value="GO_Central"/>
</dbReference>
<dbReference type="GO" id="GO:0004252">
    <property type="term" value="F:serine-type endopeptidase activity"/>
    <property type="evidence" value="ECO:0000318"/>
    <property type="project" value="GO_Central"/>
</dbReference>
<dbReference type="GO" id="GO:0006515">
    <property type="term" value="P:protein quality control for misfolded or incompletely synthesized proteins"/>
    <property type="evidence" value="ECO:0000318"/>
    <property type="project" value="GO_Central"/>
</dbReference>
<dbReference type="CDD" id="cd07017">
    <property type="entry name" value="S14_ClpP_2"/>
    <property type="match status" value="1"/>
</dbReference>
<dbReference type="FunFam" id="3.90.226.10:FF:000001">
    <property type="entry name" value="ATP-dependent Clp protease proteolytic subunit"/>
    <property type="match status" value="1"/>
</dbReference>
<dbReference type="Gene3D" id="3.90.226.10">
    <property type="entry name" value="2-enoyl-CoA Hydratase, Chain A, domain 1"/>
    <property type="match status" value="1"/>
</dbReference>
<dbReference type="HAMAP" id="MF_00444">
    <property type="entry name" value="ClpP"/>
    <property type="match status" value="1"/>
</dbReference>
<dbReference type="InterPro" id="IPR001907">
    <property type="entry name" value="ClpP"/>
</dbReference>
<dbReference type="InterPro" id="IPR029045">
    <property type="entry name" value="ClpP/crotonase-like_dom_sf"/>
</dbReference>
<dbReference type="InterPro" id="IPR023562">
    <property type="entry name" value="ClpP/TepA"/>
</dbReference>
<dbReference type="InterPro" id="IPR033135">
    <property type="entry name" value="ClpP_His_AS"/>
</dbReference>
<dbReference type="InterPro" id="IPR018215">
    <property type="entry name" value="ClpP_Ser_AS"/>
</dbReference>
<dbReference type="NCBIfam" id="TIGR00493">
    <property type="entry name" value="clpP"/>
    <property type="match status" value="1"/>
</dbReference>
<dbReference type="NCBIfam" id="NF001368">
    <property type="entry name" value="PRK00277.1"/>
    <property type="match status" value="1"/>
</dbReference>
<dbReference type="NCBIfam" id="NF009205">
    <property type="entry name" value="PRK12553.1"/>
    <property type="match status" value="1"/>
</dbReference>
<dbReference type="PANTHER" id="PTHR10381">
    <property type="entry name" value="ATP-DEPENDENT CLP PROTEASE PROTEOLYTIC SUBUNIT"/>
    <property type="match status" value="1"/>
</dbReference>
<dbReference type="PANTHER" id="PTHR10381:SF70">
    <property type="entry name" value="ATP-DEPENDENT CLP PROTEASE PROTEOLYTIC SUBUNIT"/>
    <property type="match status" value="1"/>
</dbReference>
<dbReference type="Pfam" id="PF00574">
    <property type="entry name" value="CLP_protease"/>
    <property type="match status" value="1"/>
</dbReference>
<dbReference type="PRINTS" id="PR00127">
    <property type="entry name" value="CLPPROTEASEP"/>
</dbReference>
<dbReference type="SUPFAM" id="SSF52096">
    <property type="entry name" value="ClpP/crotonase"/>
    <property type="match status" value="1"/>
</dbReference>
<dbReference type="PROSITE" id="PS00382">
    <property type="entry name" value="CLP_PROTEASE_HIS"/>
    <property type="match status" value="1"/>
</dbReference>
<dbReference type="PROSITE" id="PS00381">
    <property type="entry name" value="CLP_PROTEASE_SER"/>
    <property type="match status" value="1"/>
</dbReference>
<sequence length="208" mass="22805">MSIVTKALNLVPMVVEQTSRGERAYDIYSRLLKERLIFLVGPIDDHMANVIVAQLLFLEADNPEKDISIYINSPGGVVTAGMAIYDTMQYIKPDVSTICVGQAASMGALLLASGAAGKRYALPNSRVMIHQPLGGFQGQATDIDIHAREILTLRSRLNEILAKHTGQSLETIARDTERDNFKSAVDAQAYGLVDHVLERRPEESIQPS</sequence>
<reference key="1">
    <citation type="journal article" date="2002" name="Nature">
        <title>Comparison of the genomes of two Xanthomonas pathogens with differing host specificities.</title>
        <authorList>
            <person name="da Silva A.C.R."/>
            <person name="Ferro J.A."/>
            <person name="Reinach F.C."/>
            <person name="Farah C.S."/>
            <person name="Furlan L.R."/>
            <person name="Quaggio R.B."/>
            <person name="Monteiro-Vitorello C.B."/>
            <person name="Van Sluys M.A."/>
            <person name="Almeida N.F. Jr."/>
            <person name="Alves L.M.C."/>
            <person name="do Amaral A.M."/>
            <person name="Bertolini M.C."/>
            <person name="Camargo L.E.A."/>
            <person name="Camarotte G."/>
            <person name="Cannavan F."/>
            <person name="Cardozo J."/>
            <person name="Chambergo F."/>
            <person name="Ciapina L.P."/>
            <person name="Cicarelli R.M.B."/>
            <person name="Coutinho L.L."/>
            <person name="Cursino-Santos J.R."/>
            <person name="El-Dorry H."/>
            <person name="Faria J.B."/>
            <person name="Ferreira A.J.S."/>
            <person name="Ferreira R.C.C."/>
            <person name="Ferro M.I.T."/>
            <person name="Formighieri E.F."/>
            <person name="Franco M.C."/>
            <person name="Greggio C.C."/>
            <person name="Gruber A."/>
            <person name="Katsuyama A.M."/>
            <person name="Kishi L.T."/>
            <person name="Leite R.P."/>
            <person name="Lemos E.G.M."/>
            <person name="Lemos M.V.F."/>
            <person name="Locali E.C."/>
            <person name="Machado M.A."/>
            <person name="Madeira A.M.B.N."/>
            <person name="Martinez-Rossi N.M."/>
            <person name="Martins E.C."/>
            <person name="Meidanis J."/>
            <person name="Menck C.F.M."/>
            <person name="Miyaki C.Y."/>
            <person name="Moon D.H."/>
            <person name="Moreira L.M."/>
            <person name="Novo M.T.M."/>
            <person name="Okura V.K."/>
            <person name="Oliveira M.C."/>
            <person name="Oliveira V.R."/>
            <person name="Pereira H.A."/>
            <person name="Rossi A."/>
            <person name="Sena J.A.D."/>
            <person name="Silva C."/>
            <person name="de Souza R.F."/>
            <person name="Spinola L.A.F."/>
            <person name="Takita M.A."/>
            <person name="Tamura R.E."/>
            <person name="Teixeira E.C."/>
            <person name="Tezza R.I.D."/>
            <person name="Trindade dos Santos M."/>
            <person name="Truffi D."/>
            <person name="Tsai S.M."/>
            <person name="White F.F."/>
            <person name="Setubal J.C."/>
            <person name="Kitajima J.P."/>
        </authorList>
    </citation>
    <scope>NUCLEOTIDE SEQUENCE [LARGE SCALE GENOMIC DNA]</scope>
    <source>
        <strain>ATCC 33913 / DSM 3586 / NCPPB 528 / LMG 568 / P 25</strain>
    </source>
</reference>
<keyword id="KW-0963">Cytoplasm</keyword>
<keyword id="KW-0378">Hydrolase</keyword>
<keyword id="KW-0645">Protease</keyword>
<keyword id="KW-1185">Reference proteome</keyword>
<keyword id="KW-0720">Serine protease</keyword>
<proteinExistence type="inferred from homology"/>
<comment type="function">
    <text evidence="1">Cleaves peptides in various proteins in a process that requires ATP hydrolysis. Has a chymotrypsin-like activity. Plays a major role in the degradation of misfolded proteins.</text>
</comment>
<comment type="catalytic activity">
    <reaction evidence="1">
        <text>Hydrolysis of proteins to small peptides in the presence of ATP and magnesium. alpha-casein is the usual test substrate. In the absence of ATP, only oligopeptides shorter than five residues are hydrolyzed (such as succinyl-Leu-Tyr-|-NHMec, and Leu-Tyr-Leu-|-Tyr-Trp, in which cleavage of the -Tyr-|-Leu- and -Tyr-|-Trp bonds also occurs).</text>
        <dbReference type="EC" id="3.4.21.92"/>
    </reaction>
</comment>
<comment type="subunit">
    <text evidence="1">Fourteen ClpP subunits assemble into 2 heptameric rings which stack back to back to give a disk-like structure with a central cavity, resembling the structure of eukaryotic proteasomes.</text>
</comment>
<comment type="subcellular location">
    <subcellularLocation>
        <location evidence="1">Cytoplasm</location>
    </subcellularLocation>
</comment>
<comment type="similarity">
    <text evidence="1">Belongs to the peptidase S14 family.</text>
</comment>